<feature type="chain" id="PRO_0000095779" description="Translation initiation factor IF-1">
    <location>
        <begin position="1"/>
        <end position="72"/>
    </location>
</feature>
<feature type="domain" description="S1-like" evidence="1">
    <location>
        <begin position="1"/>
        <end position="72"/>
    </location>
</feature>
<protein>
    <recommendedName>
        <fullName evidence="1">Translation initiation factor IF-1</fullName>
    </recommendedName>
</protein>
<proteinExistence type="inferred from homology"/>
<accession>Q8NSV7</accession>
<sequence>MAKEGAIEVEGRIVEPLPNAMFRVELDNGHKVLAHISGKMRQHYIRILPEDRVVVELSPYDLTRGRIVYRYK</sequence>
<organism>
    <name type="scientific">Corynebacterium glutamicum (strain ATCC 13032 / DSM 20300 / JCM 1318 / BCRC 11384 / CCUG 27702 / LMG 3730 / NBRC 12168 / NCIMB 10025 / NRRL B-2784 / 534)</name>
    <dbReference type="NCBI Taxonomy" id="196627"/>
    <lineage>
        <taxon>Bacteria</taxon>
        <taxon>Bacillati</taxon>
        <taxon>Actinomycetota</taxon>
        <taxon>Actinomycetes</taxon>
        <taxon>Mycobacteriales</taxon>
        <taxon>Corynebacteriaceae</taxon>
        <taxon>Corynebacterium</taxon>
    </lineage>
</organism>
<comment type="function">
    <text evidence="1">One of the essential components for the initiation of protein synthesis. Stabilizes the binding of IF-2 and IF-3 on the 30S subunit to which N-formylmethionyl-tRNA(fMet) subsequently binds. Helps modulate mRNA selection, yielding the 30S pre-initiation complex (PIC). Upon addition of the 50S ribosomal subunit IF-1, IF-2 and IF-3 are released leaving the mature 70S translation initiation complex.</text>
</comment>
<comment type="subunit">
    <text evidence="1">Component of the 30S ribosomal translation pre-initiation complex which assembles on the 30S ribosome in the order IF-2 and IF-3, IF-1 and N-formylmethionyl-tRNA(fMet); mRNA recruitment can occur at any time during PIC assembly.</text>
</comment>
<comment type="subcellular location">
    <subcellularLocation>
        <location evidence="1">Cytoplasm</location>
    </subcellularLocation>
</comment>
<comment type="similarity">
    <text evidence="1">Belongs to the IF-1 family.</text>
</comment>
<dbReference type="EMBL" id="BA000036">
    <property type="protein sequence ID" value="BAB97953.1"/>
    <property type="molecule type" value="Genomic_DNA"/>
</dbReference>
<dbReference type="EMBL" id="BX927149">
    <property type="protein sequence ID" value="CAF19266.1"/>
    <property type="molecule type" value="Genomic_DNA"/>
</dbReference>
<dbReference type="RefSeq" id="NP_599797.1">
    <property type="nucleotide sequence ID" value="NC_003450.3"/>
</dbReference>
<dbReference type="RefSeq" id="WP_003854422.1">
    <property type="nucleotide sequence ID" value="NC_006958.1"/>
</dbReference>
<dbReference type="SMR" id="Q8NSV7"/>
<dbReference type="STRING" id="196627.cg0651"/>
<dbReference type="GeneID" id="92759275"/>
<dbReference type="KEGG" id="cgb:cg0651"/>
<dbReference type="KEGG" id="cgl:Cgl0560"/>
<dbReference type="PATRIC" id="fig|196627.13.peg.552"/>
<dbReference type="eggNOG" id="COG0361">
    <property type="taxonomic scope" value="Bacteria"/>
</dbReference>
<dbReference type="HOGENOM" id="CLU_151267_1_0_11"/>
<dbReference type="OrthoDB" id="9803250at2"/>
<dbReference type="BioCyc" id="CORYNE:G18NG-10122-MONOMER"/>
<dbReference type="PRO" id="PR:Q8NSV7"/>
<dbReference type="Proteomes" id="UP000000582">
    <property type="component" value="Chromosome"/>
</dbReference>
<dbReference type="Proteomes" id="UP000001009">
    <property type="component" value="Chromosome"/>
</dbReference>
<dbReference type="GO" id="GO:0005829">
    <property type="term" value="C:cytosol"/>
    <property type="evidence" value="ECO:0007669"/>
    <property type="project" value="TreeGrafter"/>
</dbReference>
<dbReference type="GO" id="GO:0043022">
    <property type="term" value="F:ribosome binding"/>
    <property type="evidence" value="ECO:0007669"/>
    <property type="project" value="UniProtKB-UniRule"/>
</dbReference>
<dbReference type="GO" id="GO:0019843">
    <property type="term" value="F:rRNA binding"/>
    <property type="evidence" value="ECO:0007669"/>
    <property type="project" value="UniProtKB-UniRule"/>
</dbReference>
<dbReference type="GO" id="GO:0003743">
    <property type="term" value="F:translation initiation factor activity"/>
    <property type="evidence" value="ECO:0007669"/>
    <property type="project" value="UniProtKB-UniRule"/>
</dbReference>
<dbReference type="CDD" id="cd04451">
    <property type="entry name" value="S1_IF1"/>
    <property type="match status" value="1"/>
</dbReference>
<dbReference type="FunFam" id="2.40.50.140:FF:000002">
    <property type="entry name" value="Translation initiation factor IF-1"/>
    <property type="match status" value="1"/>
</dbReference>
<dbReference type="Gene3D" id="2.40.50.140">
    <property type="entry name" value="Nucleic acid-binding proteins"/>
    <property type="match status" value="1"/>
</dbReference>
<dbReference type="HAMAP" id="MF_00075">
    <property type="entry name" value="IF_1"/>
    <property type="match status" value="1"/>
</dbReference>
<dbReference type="InterPro" id="IPR012340">
    <property type="entry name" value="NA-bd_OB-fold"/>
</dbReference>
<dbReference type="InterPro" id="IPR006196">
    <property type="entry name" value="RNA-binding_domain_S1_IF1"/>
</dbReference>
<dbReference type="InterPro" id="IPR003029">
    <property type="entry name" value="S1_domain"/>
</dbReference>
<dbReference type="InterPro" id="IPR004368">
    <property type="entry name" value="TIF_IF1"/>
</dbReference>
<dbReference type="NCBIfam" id="TIGR00008">
    <property type="entry name" value="infA"/>
    <property type="match status" value="1"/>
</dbReference>
<dbReference type="PANTHER" id="PTHR33370">
    <property type="entry name" value="TRANSLATION INITIATION FACTOR IF-1, CHLOROPLASTIC"/>
    <property type="match status" value="1"/>
</dbReference>
<dbReference type="PANTHER" id="PTHR33370:SF1">
    <property type="entry name" value="TRANSLATION INITIATION FACTOR IF-1, CHLOROPLASTIC"/>
    <property type="match status" value="1"/>
</dbReference>
<dbReference type="Pfam" id="PF01176">
    <property type="entry name" value="eIF-1a"/>
    <property type="match status" value="1"/>
</dbReference>
<dbReference type="SMART" id="SM00316">
    <property type="entry name" value="S1"/>
    <property type="match status" value="1"/>
</dbReference>
<dbReference type="SUPFAM" id="SSF50249">
    <property type="entry name" value="Nucleic acid-binding proteins"/>
    <property type="match status" value="1"/>
</dbReference>
<dbReference type="PROSITE" id="PS50832">
    <property type="entry name" value="S1_IF1_TYPE"/>
    <property type="match status" value="1"/>
</dbReference>
<gene>
    <name evidence="1" type="primary">infA</name>
    <name type="ordered locus">Cgl0560</name>
    <name type="ordered locus">cg0651</name>
</gene>
<keyword id="KW-0963">Cytoplasm</keyword>
<keyword id="KW-0396">Initiation factor</keyword>
<keyword id="KW-0648">Protein biosynthesis</keyword>
<keyword id="KW-1185">Reference proteome</keyword>
<keyword id="KW-0694">RNA-binding</keyword>
<keyword id="KW-0699">rRNA-binding</keyword>
<reference key="1">
    <citation type="journal article" date="2003" name="Appl. Microbiol. Biotechnol.">
        <title>The Corynebacterium glutamicum genome: features and impacts on biotechnological processes.</title>
        <authorList>
            <person name="Ikeda M."/>
            <person name="Nakagawa S."/>
        </authorList>
    </citation>
    <scope>NUCLEOTIDE SEQUENCE [LARGE SCALE GENOMIC DNA]</scope>
    <source>
        <strain>ATCC 13032 / DSM 20300 / JCM 1318 / BCRC 11384 / CCUG 27702 / LMG 3730 / NBRC 12168 / NCIMB 10025 / NRRL B-2784 / 534</strain>
    </source>
</reference>
<reference key="2">
    <citation type="journal article" date="2003" name="J. Biotechnol.">
        <title>The complete Corynebacterium glutamicum ATCC 13032 genome sequence and its impact on the production of L-aspartate-derived amino acids and vitamins.</title>
        <authorList>
            <person name="Kalinowski J."/>
            <person name="Bathe B."/>
            <person name="Bartels D."/>
            <person name="Bischoff N."/>
            <person name="Bott M."/>
            <person name="Burkovski A."/>
            <person name="Dusch N."/>
            <person name="Eggeling L."/>
            <person name="Eikmanns B.J."/>
            <person name="Gaigalat L."/>
            <person name="Goesmann A."/>
            <person name="Hartmann M."/>
            <person name="Huthmacher K."/>
            <person name="Kraemer R."/>
            <person name="Linke B."/>
            <person name="McHardy A.C."/>
            <person name="Meyer F."/>
            <person name="Moeckel B."/>
            <person name="Pfefferle W."/>
            <person name="Puehler A."/>
            <person name="Rey D.A."/>
            <person name="Rueckert C."/>
            <person name="Rupp O."/>
            <person name="Sahm H."/>
            <person name="Wendisch V.F."/>
            <person name="Wiegraebe I."/>
            <person name="Tauch A."/>
        </authorList>
    </citation>
    <scope>NUCLEOTIDE SEQUENCE [LARGE SCALE GENOMIC DNA]</scope>
    <source>
        <strain>ATCC 13032 / DSM 20300 / JCM 1318 / BCRC 11384 / CCUG 27702 / LMG 3730 / NBRC 12168 / NCIMB 10025 / NRRL B-2784 / 534</strain>
    </source>
</reference>
<name>IF1_CORGL</name>
<evidence type="ECO:0000255" key="1">
    <source>
        <dbReference type="HAMAP-Rule" id="MF_00075"/>
    </source>
</evidence>